<gene>
    <name evidence="1" type="primary">rpsG</name>
    <name type="ordered locus">PFLU_5531</name>
</gene>
<comment type="function">
    <text evidence="1">One of the primary rRNA binding proteins, it binds directly to 16S rRNA where it nucleates assembly of the head domain of the 30S subunit. Is located at the subunit interface close to the decoding center, probably blocks exit of the E-site tRNA.</text>
</comment>
<comment type="subunit">
    <text evidence="1">Part of the 30S ribosomal subunit. Contacts proteins S9 and S11.</text>
</comment>
<comment type="similarity">
    <text evidence="1">Belongs to the universal ribosomal protein uS7 family.</text>
</comment>
<proteinExistence type="inferred from homology"/>
<feature type="chain" id="PRO_1000206412" description="Small ribosomal subunit protein uS7">
    <location>
        <begin position="1"/>
        <end position="156"/>
    </location>
</feature>
<keyword id="KW-0687">Ribonucleoprotein</keyword>
<keyword id="KW-0689">Ribosomal protein</keyword>
<keyword id="KW-0694">RNA-binding</keyword>
<keyword id="KW-0699">rRNA-binding</keyword>
<keyword id="KW-0820">tRNA-binding</keyword>
<reference key="1">
    <citation type="journal article" date="2009" name="Genome Biol.">
        <title>Genomic and genetic analyses of diversity and plant interactions of Pseudomonas fluorescens.</title>
        <authorList>
            <person name="Silby M.W."/>
            <person name="Cerdeno-Tarraga A.M."/>
            <person name="Vernikos G.S."/>
            <person name="Giddens S.R."/>
            <person name="Jackson R.W."/>
            <person name="Preston G.M."/>
            <person name="Zhang X.-X."/>
            <person name="Moon C.D."/>
            <person name="Gehrig S.M."/>
            <person name="Godfrey S.A.C."/>
            <person name="Knight C.G."/>
            <person name="Malone J.G."/>
            <person name="Robinson Z."/>
            <person name="Spiers A.J."/>
            <person name="Harris S."/>
            <person name="Challis G.L."/>
            <person name="Yaxley A.M."/>
            <person name="Harris D."/>
            <person name="Seeger K."/>
            <person name="Murphy L."/>
            <person name="Rutter S."/>
            <person name="Squares R."/>
            <person name="Quail M.A."/>
            <person name="Saunders E."/>
            <person name="Mavromatis K."/>
            <person name="Brettin T.S."/>
            <person name="Bentley S.D."/>
            <person name="Hothersall J."/>
            <person name="Stephens E."/>
            <person name="Thomas C.M."/>
            <person name="Parkhill J."/>
            <person name="Levy S.B."/>
            <person name="Rainey P.B."/>
            <person name="Thomson N.R."/>
        </authorList>
    </citation>
    <scope>NUCLEOTIDE SEQUENCE [LARGE SCALE GENOMIC DNA]</scope>
    <source>
        <strain>SBW25</strain>
    </source>
</reference>
<evidence type="ECO:0000255" key="1">
    <source>
        <dbReference type="HAMAP-Rule" id="MF_00480"/>
    </source>
</evidence>
<evidence type="ECO:0000305" key="2"/>
<protein>
    <recommendedName>
        <fullName evidence="1">Small ribosomal subunit protein uS7</fullName>
    </recommendedName>
    <alternativeName>
        <fullName evidence="2">30S ribosomal protein S7</fullName>
    </alternativeName>
</protein>
<organism>
    <name type="scientific">Pseudomonas fluorescens (strain SBW25)</name>
    <dbReference type="NCBI Taxonomy" id="216595"/>
    <lineage>
        <taxon>Bacteria</taxon>
        <taxon>Pseudomonadati</taxon>
        <taxon>Pseudomonadota</taxon>
        <taxon>Gammaproteobacteria</taxon>
        <taxon>Pseudomonadales</taxon>
        <taxon>Pseudomonadaceae</taxon>
        <taxon>Pseudomonas</taxon>
    </lineage>
</organism>
<dbReference type="EMBL" id="AM181176">
    <property type="protein sequence ID" value="CAY52773.1"/>
    <property type="molecule type" value="Genomic_DNA"/>
</dbReference>
<dbReference type="RefSeq" id="WP_002555493.1">
    <property type="nucleotide sequence ID" value="NC_012660.1"/>
</dbReference>
<dbReference type="SMR" id="C3K2Y0"/>
<dbReference type="STRING" id="294.SRM1_05183"/>
<dbReference type="GeneID" id="97919458"/>
<dbReference type="eggNOG" id="COG0049">
    <property type="taxonomic scope" value="Bacteria"/>
</dbReference>
<dbReference type="HOGENOM" id="CLU_072226_1_1_6"/>
<dbReference type="OrthoDB" id="9807653at2"/>
<dbReference type="GO" id="GO:0015935">
    <property type="term" value="C:small ribosomal subunit"/>
    <property type="evidence" value="ECO:0007669"/>
    <property type="project" value="InterPro"/>
</dbReference>
<dbReference type="GO" id="GO:0019843">
    <property type="term" value="F:rRNA binding"/>
    <property type="evidence" value="ECO:0007669"/>
    <property type="project" value="UniProtKB-UniRule"/>
</dbReference>
<dbReference type="GO" id="GO:0003735">
    <property type="term" value="F:structural constituent of ribosome"/>
    <property type="evidence" value="ECO:0007669"/>
    <property type="project" value="InterPro"/>
</dbReference>
<dbReference type="GO" id="GO:0000049">
    <property type="term" value="F:tRNA binding"/>
    <property type="evidence" value="ECO:0007669"/>
    <property type="project" value="UniProtKB-UniRule"/>
</dbReference>
<dbReference type="GO" id="GO:0006412">
    <property type="term" value="P:translation"/>
    <property type="evidence" value="ECO:0007669"/>
    <property type="project" value="UniProtKB-UniRule"/>
</dbReference>
<dbReference type="CDD" id="cd14869">
    <property type="entry name" value="uS7_Bacteria"/>
    <property type="match status" value="1"/>
</dbReference>
<dbReference type="FunFam" id="1.10.455.10:FF:000001">
    <property type="entry name" value="30S ribosomal protein S7"/>
    <property type="match status" value="1"/>
</dbReference>
<dbReference type="Gene3D" id="1.10.455.10">
    <property type="entry name" value="Ribosomal protein S7 domain"/>
    <property type="match status" value="1"/>
</dbReference>
<dbReference type="HAMAP" id="MF_00480_B">
    <property type="entry name" value="Ribosomal_uS7_B"/>
    <property type="match status" value="1"/>
</dbReference>
<dbReference type="InterPro" id="IPR000235">
    <property type="entry name" value="Ribosomal_uS7"/>
</dbReference>
<dbReference type="InterPro" id="IPR005717">
    <property type="entry name" value="Ribosomal_uS7_bac/org-type"/>
</dbReference>
<dbReference type="InterPro" id="IPR020606">
    <property type="entry name" value="Ribosomal_uS7_CS"/>
</dbReference>
<dbReference type="InterPro" id="IPR023798">
    <property type="entry name" value="Ribosomal_uS7_dom"/>
</dbReference>
<dbReference type="InterPro" id="IPR036823">
    <property type="entry name" value="Ribosomal_uS7_dom_sf"/>
</dbReference>
<dbReference type="NCBIfam" id="TIGR01029">
    <property type="entry name" value="rpsG_bact"/>
    <property type="match status" value="1"/>
</dbReference>
<dbReference type="PANTHER" id="PTHR11205">
    <property type="entry name" value="RIBOSOMAL PROTEIN S7"/>
    <property type="match status" value="1"/>
</dbReference>
<dbReference type="Pfam" id="PF00177">
    <property type="entry name" value="Ribosomal_S7"/>
    <property type="match status" value="1"/>
</dbReference>
<dbReference type="PIRSF" id="PIRSF002122">
    <property type="entry name" value="RPS7p_RPS7a_RPS5e_RPS7o"/>
    <property type="match status" value="1"/>
</dbReference>
<dbReference type="SUPFAM" id="SSF47973">
    <property type="entry name" value="Ribosomal protein S7"/>
    <property type="match status" value="1"/>
</dbReference>
<dbReference type="PROSITE" id="PS00052">
    <property type="entry name" value="RIBOSOMAL_S7"/>
    <property type="match status" value="1"/>
</dbReference>
<sequence length="156" mass="17648">MPRRRVAAKREVLDDPKYGSQILAKFMNHVMESGKKAVAERIVYGALEKVKERKNSDPLEIFEKALDAIAPLVEVKSRRVGGATYQVPVEVRPSRRNALAMRWLVDFARKRGEKSMALRLAGELLDAAEGKGAAVKKREDVHRMAEANKAFSHYRF</sequence>
<name>RS7_PSEFS</name>
<accession>C3K2Y0</accession>